<feature type="chain" id="PRO_0000124568" description="Heat shock factor protein 1">
    <location>
        <begin position="1"/>
        <end position="525"/>
    </location>
</feature>
<feature type="region of interest" description="DNA-binding domain" evidence="1">
    <location>
        <begin position="15"/>
        <end position="120"/>
    </location>
</feature>
<feature type="region of interest" description="Hydrophobic repeat HR-A/B" evidence="1">
    <location>
        <begin position="130"/>
        <end position="203"/>
    </location>
</feature>
<feature type="region of interest" description="D domain" evidence="1">
    <location>
        <begin position="203"/>
        <end position="224"/>
    </location>
</feature>
<feature type="region of interest" description="Regulatory domain" evidence="1">
    <location>
        <begin position="221"/>
        <end position="310"/>
    </location>
</feature>
<feature type="region of interest" description="Disordered" evidence="2">
    <location>
        <begin position="272"/>
        <end position="327"/>
    </location>
</feature>
<feature type="region of interest" description="Disordered" evidence="2">
    <location>
        <begin position="340"/>
        <end position="365"/>
    </location>
</feature>
<feature type="region of interest" description="Transactivation domain" evidence="1">
    <location>
        <begin position="367"/>
        <end position="525"/>
    </location>
</feature>
<feature type="region of interest" description="Hydrophobic repeat HR-C" evidence="1">
    <location>
        <begin position="380"/>
        <end position="405"/>
    </location>
</feature>
<feature type="region of interest" description="Disordered" evidence="2">
    <location>
        <begin position="441"/>
        <end position="460"/>
    </location>
</feature>
<feature type="region of interest" description="Disordered" evidence="2">
    <location>
        <begin position="495"/>
        <end position="525"/>
    </location>
</feature>
<feature type="short sequence motif" description="9aaTAD" evidence="1">
    <location>
        <begin position="408"/>
        <end position="416"/>
    </location>
</feature>
<feature type="compositionally biased region" description="Polar residues" evidence="2">
    <location>
        <begin position="343"/>
        <end position="355"/>
    </location>
</feature>
<feature type="compositionally biased region" description="Basic and acidic residues" evidence="2">
    <location>
        <begin position="515"/>
        <end position="525"/>
    </location>
</feature>
<feature type="modified residue" description="N-acetylmethionine" evidence="1">
    <location>
        <position position="1"/>
    </location>
</feature>
<feature type="modified residue" description="N6-acetyllysine" evidence="1">
    <location>
        <position position="80"/>
    </location>
</feature>
<feature type="modified residue" description="N6-acetyllysine; alternate" evidence="1">
    <location>
        <position position="91"/>
    </location>
</feature>
<feature type="modified residue" description="N6-acetyllysine" evidence="1">
    <location>
        <position position="118"/>
    </location>
</feature>
<feature type="modified residue" description="Phosphoserine; by MAPKAPK2" evidence="1">
    <location>
        <position position="121"/>
    </location>
</feature>
<feature type="modified residue" description="Phosphothreonine; by CK2" evidence="1">
    <location>
        <position position="142"/>
    </location>
</feature>
<feature type="modified residue" description="N6-acetyllysine" evidence="1">
    <location>
        <position position="150"/>
    </location>
</feature>
<feature type="modified residue" description="N6-acetyllysine" evidence="1">
    <location>
        <position position="188"/>
    </location>
</feature>
<feature type="modified residue" description="N6-acetyllysine; alternate" evidence="1">
    <location>
        <position position="208"/>
    </location>
</feature>
<feature type="modified residue" description="Phosphoserine; by PLK1" evidence="1">
    <location>
        <position position="216"/>
    </location>
</feature>
<feature type="modified residue" description="Phosphoserine; by CAMK2A" evidence="1">
    <location>
        <position position="230"/>
    </location>
</feature>
<feature type="modified residue" description="Phosphoserine" evidence="1">
    <location>
        <position position="275"/>
    </location>
</feature>
<feature type="modified residue" description="Phosphoserine" evidence="1">
    <location>
        <position position="292"/>
    </location>
</feature>
<feature type="modified residue" description="N6-acetyllysine; alternate" evidence="1">
    <location>
        <position position="298"/>
    </location>
</feature>
<feature type="modified residue" description="Phosphoserine" evidence="9">
    <location>
        <position position="303"/>
    </location>
</feature>
<feature type="modified residue" description="Phosphoserine" evidence="9">
    <location>
        <position position="307"/>
    </location>
</feature>
<feature type="modified residue" description="Phosphoserine" evidence="1">
    <location>
        <position position="314"/>
    </location>
</feature>
<feature type="modified residue" description="Phosphoserine" evidence="1">
    <location>
        <position position="319"/>
    </location>
</feature>
<feature type="modified residue" description="Phosphoserine; by PKA" evidence="1">
    <location>
        <position position="320"/>
    </location>
</feature>
<feature type="modified residue" description="Phosphothreonine" evidence="1">
    <location>
        <position position="323"/>
    </location>
</feature>
<feature type="modified residue" description="Phosphoserine; by MAPK12" evidence="1">
    <location>
        <position position="326"/>
    </location>
</feature>
<feature type="modified residue" description="Phosphoserine" evidence="1">
    <location>
        <position position="345"/>
    </location>
</feature>
<feature type="modified residue" description="Phosphoserine; by PLK1" evidence="1">
    <location>
        <position position="415"/>
    </location>
</feature>
<feature type="modified residue" description="Phosphoserine" evidence="1">
    <location>
        <position position="440"/>
    </location>
</feature>
<feature type="modified residue" description="N6-acetyllysine" evidence="1">
    <location>
        <position position="520"/>
    </location>
</feature>
<feature type="cross-link" description="Glycyl lysine isopeptide (Lys-Gly) (interchain with G-Cter in SUMO2); alternate" evidence="1">
    <location>
        <position position="91"/>
    </location>
</feature>
<feature type="cross-link" description="Glycyl lysine isopeptide (Lys-Gly) (interchain with G-Cter in SUMO2)" evidence="1">
    <location>
        <position position="126"/>
    </location>
</feature>
<feature type="cross-link" description="Glycyl lysine isopeptide (Lys-Gly) (interchain with G-Cter in SUMO2)" evidence="1">
    <location>
        <position position="131"/>
    </location>
</feature>
<feature type="cross-link" description="Glycyl lysine isopeptide (Lys-Gly) (interchain with G-Cter in SUMO2); alternate" evidence="1">
    <location>
        <position position="208"/>
    </location>
</feature>
<feature type="cross-link" description="Glycyl lysine isopeptide (Lys-Gly) (interchain with G-Cter in SUMO2)" evidence="1">
    <location>
        <position position="224"/>
    </location>
</feature>
<feature type="cross-link" description="Glycyl lysine isopeptide (Lys-Gly) (interchain with G-Cter in SUMO); alternate" evidence="1">
    <location>
        <position position="298"/>
    </location>
</feature>
<feature type="cross-link" description="Glycyl lysine isopeptide (Lys-Gly) (interchain with G-Cter in SUMO2); alternate" evidence="1">
    <location>
        <position position="298"/>
    </location>
</feature>
<feature type="splice variant" id="VSP_002416" description="In isoform 1." evidence="5 6">
    <location>
        <begin position="413"/>
        <end position="434"/>
    </location>
</feature>
<reference key="1">
    <citation type="journal article" date="1991" name="Genes Dev.">
        <title>Cloning and characterization of two mouse heat shock factors with distinct inducible and constitutive DNA-binding ability.</title>
        <authorList>
            <person name="Sarge K.D."/>
            <person name="Zimarino V."/>
            <person name="Holm K."/>
            <person name="Wu C."/>
            <person name="Morimoto R.I."/>
        </authorList>
    </citation>
    <scope>NUCLEOTIDE SEQUENCE [MRNA] (ISOFORM 1)</scope>
    <scope>FUNCTION</scope>
    <scope>DNA-BINDING</scope>
    <source>
        <strain>WEHI-3</strain>
    </source>
</reference>
<reference key="2">
    <citation type="journal article" date="2004" name="Genome Res.">
        <title>The status, quality, and expansion of the NIH full-length cDNA project: the Mammalian Gene Collection (MGC).</title>
        <authorList>
            <consortium name="The MGC Project Team"/>
        </authorList>
    </citation>
    <scope>NUCLEOTIDE SEQUENCE [LARGE SCALE MRNA] (ISOFORM 1)</scope>
</reference>
<reference key="3">
    <citation type="journal article" date="1998" name="J. Biol. Chem.">
        <title>Structural organization and promoter analysis of murine heat shock transcription factor-1 gene.</title>
        <authorList>
            <person name="Zhang Y."/>
            <person name="Koushik S."/>
            <person name="Dai R."/>
            <person name="Mivechi N.F."/>
        </authorList>
    </citation>
    <scope>NUCLEOTIDE SEQUENCE [GENOMIC DNA] OF 40-525 (ISOFORM 2)</scope>
    <source>
        <strain>129/SvJ</strain>
        <tissue>Liver</tissue>
    </source>
</reference>
<reference key="4">
    <citation type="journal article" date="2009" name="Mol. Cell. Proteomics">
        <title>Large scale localization of protein phosphorylation by use of electron capture dissociation mass spectrometry.</title>
        <authorList>
            <person name="Sweet S.M."/>
            <person name="Bailey C.M."/>
            <person name="Cunningham D.L."/>
            <person name="Heath J.K."/>
            <person name="Cooper H.J."/>
        </authorList>
    </citation>
    <scope>PHOSPHORYLATION [LARGE SCALE ANALYSIS] AT SER-303 AND SER-307</scope>
    <scope>IDENTIFICATION BY MASS SPECTROMETRY [LARGE SCALE ANALYSIS]</scope>
    <source>
        <tissue>Embryonic fibroblast</tissue>
    </source>
</reference>
<reference key="5">
    <citation type="journal article" date="2010" name="Mol. Cell. Biol.">
        <title>A novel transcriptional repressor, Rhit, is involved in heat-inducible and age-dependent expression of Mpv17-like protein, a participant in reactive oxygen species metabolism.</title>
        <authorList>
            <person name="Iida R."/>
            <person name="Ueki M."/>
            <person name="Yasuda T."/>
        </authorList>
    </citation>
    <scope>FUNCTION</scope>
</reference>
<reference key="6">
    <citation type="journal article" date="2015" name="Biochem. Biophys. Res. Commun.">
        <title>BAG3 affects the nucleocytoplasmic shuttling of HSF1 upon heat stress.</title>
        <authorList>
            <person name="Jin Y.H."/>
            <person name="Ahn S.G."/>
            <person name="Kim S.A."/>
        </authorList>
    </citation>
    <scope>SUBCELLULAR LOCATION</scope>
</reference>
<keyword id="KW-0007">Acetylation</keyword>
<keyword id="KW-0010">Activator</keyword>
<keyword id="KW-0025">Alternative splicing</keyword>
<keyword id="KW-0137">Centromere</keyword>
<keyword id="KW-0158">Chromosome</keyword>
<keyword id="KW-0963">Cytoplasm</keyword>
<keyword id="KW-0206">Cytoskeleton</keyword>
<keyword id="KW-0227">DNA damage</keyword>
<keyword id="KW-0234">DNA repair</keyword>
<keyword id="KW-0238">DNA-binding</keyword>
<keyword id="KW-1017">Isopeptide bond</keyword>
<keyword id="KW-0995">Kinetochore</keyword>
<keyword id="KW-0507">mRNA processing</keyword>
<keyword id="KW-0509">mRNA transport</keyword>
<keyword id="KW-0539">Nucleus</keyword>
<keyword id="KW-0597">Phosphoprotein</keyword>
<keyword id="KW-1185">Reference proteome</keyword>
<keyword id="KW-0346">Stress response</keyword>
<keyword id="KW-0804">Transcription</keyword>
<keyword id="KW-0805">Transcription regulation</keyword>
<keyword id="KW-0813">Transport</keyword>
<keyword id="KW-0832">Ubl conjugation</keyword>
<accession>P38532</accession>
<accession>O70462</accession>
<proteinExistence type="evidence at protein level"/>
<comment type="function">
    <text evidence="1 3">Functions as a stress-inducible and DNA-binding transcription factor that plays a central role in the transcriptional activation of the heat shock response (HSR), leading to the expression of a large class of molecular chaperones, heat shock proteins (HSPs), that protect cells from cellular insult damage. In unstressed cells, is present in a HSP90-containing multichaperone complex that maintains it in a non-DNA-binding inactivated monomeric form. Upon exposure to heat and other stress stimuli, undergoes homotrimerization and activates HSP gene transcription through binding to site-specific heat shock elements (HSEs) present in the promoter regions of HSP genes. Upon heat shock stress, forms a chromatin-associated complex with TTC5/STRAP and p300/EP300 to stimulate HSR transcription, therefore increasing cell survival. Activation is reversible, and during the attenuation and recovery phase period of the HSR, returns to its unactivated form. Binds to inverted 5'-NGAAN-3' pentamer DNA sequences. Binds to chromatin at heat shock gene promoters. Activates transcription of transcription factor FOXR1 which in turn activates transcription of the heat shock chaperones HSPA1A and HSPA6 and the antioxidant NADPH-dependent reductase DHRS2 (By similarity). Binds the promoter region upstream of exon 1 of Mpv17l to activate expression of the M-LPS isoform which is involved in metabolism of reactive oxygen species (PubMed:20231359). Also serves several other functions independently of its transcriptional activity. Involved in the repression of Ras-induced transcriptional activation of the c-fos gene in heat-stressed cells. Positively regulates pre-mRNA 3'-end processing and polyadenylation of HSP70 mRNA upon heat-stressed cells in a symplekin (SYMPK)-dependent manner. Plays a role in nuclear export of stress-induced HSP70 mRNA. Plays a role in the regulation of mitotic progression. Also plays a role as a negative regulator of non-homologous end joining (NHEJ) repair activity in a DNA damage-dependent manner. Involved in stress-induced cancer cell proliferation in a IER5-dependent manner.</text>
</comment>
<comment type="subunit">
    <text evidence="1">Monomer; cytoplasmic latent and transcriptionally inactive monomeric form in unstressed cells. Homotrimer; in response to stress, such as heat shock, homotrimerizes and translocates into the nucleus, binds to heat shock element (HSE) sequences in promoter of heat shock protein (HSP) genes and acquires transcriptional ability. Interacts (via monomeric form) with FKBP4; this interaction occurs in unstressed cells. Associates (via monomeric form) with HSP90 proteins in a multichaperone complex in unnstressed cell; this association maintains HSF1 in a non-DNA-binding and transcriptional inactive form by preventing HSF1 homotrimerization. Homotrimeric transactivation activity is modulated by protein-protein interactions and post-translational modifications. Interacts with HSP90AA1; this interaction is decreased in a IER5-dependent manner, promoting HSF1 accumulation in the nucleus, homotrimerization and DNA-binding activities. Part (via regulatory domain in the homotrimeric form) of a large heat shock-induced HSP90-dependent multichaperone complex at least composed of FKBP4, FKBP5, HSP90 proteins, PPID, PPP5C and PTGES3; this association maintains the HSF1 homotrimeric DNA-bound form in a transcriptionally inactive form. Interacts with BAG3 (via BAG domain); this interaction occurs in normal and heat-shocked cells promoting nuclear shuttling of HSF1 in a BAG3-dependent manner. Interacts (via homotrimeric and hyperphosphorylated form) with FKBP4; this interaction occurs upon heat shock in a HSP90-dependent multichaperone complex. Interacts (via homotrimeric form preferentially) with EEF1A proteins. In heat shocked cells, stress-denatured proteins compete with HSF1 homotrimeric DNA-bound form for association of the HSP90-dependent multichaperone complex, and hence alleviating repression of HSF1-mediated transcriptional activity. Interacts (via homotrimeric form preferentially) with DAXX; this interaction relieves homotrimeric HSF1 from repression of its transcriptional activity by HSP90-dependent multichaperone complex upon heat shock. Interacts (via D domain and preferentially with hyperphosphorylated form) with JNK1; this interaction occurs under both normal growth conditions and immediately upon heat shock. Interacts (via D domain and preferentially with hyperphosphorylated form) with MAPK3; this interaction occurs upon heat shock. Interacts with IER5 (via central region); this interaction promotes PPP2CA-induced dephosphorylation on Ser-121, Ser-307, Ser-314 and Thr-323 and HSF1 transactivation activity. Found in a ribonucleoprotein complex composed of the HSF1 homotrimeric form, translation elongation factor eEF1A proteins and non-coding RNA heat shock RNA-1 (HSR1); this complex occurs upon heat shock and stimulates HSF1 DNA-binding activity. Interacts (via transactivation domain) with HSPA1A/HSP70 and DNAJB1; these interactions result in the inhibition of heat shock- and HSF1-induced transcriptional activity during the attenuation and recovery phase from heat shock. Interacts (via Ser-303 and Ser-307 phosphorylated form) with YWHAE; this interaction promotes HSF1 sequestration in the cytoplasm in an ERK-dependent manner. Found in a complex with IER5 and PPP2CA. Interacts with TPR; this interaction increases upon heat shock and stimulates export of HSP70 mRNA. Interacts with SYMPK (via N-terminus) and CSTF2; these interactions occur upon heat shock. Interacts (via transactivation domain) with HSPA8. Interacts with EEF1D; this interaction occurs at heat shock promoter element (HSE) sequences. Interacts with MAPKAPK2. Interacts with PRKACA/PKA. Interacts (via transactivation domain) with GTF2A2. Interacts (via transactivation domain) with GTF2B. Interacts (via transactivation domain) with TBP. Interacts with CDK9, CCNT1 and EP300. Interacts (via N-terminus) with XRCC5 (via N-terminus) and XRCC6 (via N-terminus); these interactions are direct and prevent XRCC5/XRCC6 heterodimeric binding and non-homologous end joining (NHEJ) repair activities induced by ionizing radiation (IR). Interacts with PLK1; this interaction occurs during the early mitotic period, increases upon heat shock but does not modulate neither HSF1 homotrimerization and DNA-binding activities. Interacts (via Ser-216 phosphorylated form) with CDC20; this interaction occurs in mitosis in a MAD2L1-dependent manner and prevents PLK1-stimulated degradation of HSF1 by blocking the recruitment of the SCF(BTRC) ubiquitin ligase complex. Interacts with MAD2L1; this interaction occurs in mitosis. Interacts with BTRC; this interaction occurs during mitosis, induces its ubiquitin-dependent degradation following stimulus-dependent phosphorylation at Ser-216, a process inhibited by CDC20. Interacts with HSP90AA1 and HSP90AB1. Forms a complex with TTC5/STRAP and p300/EP300; these interactions augment chromatin-bound HSF1 and p300/EP300 histone acetyltransferase activity (By similarity).</text>
</comment>
<comment type="subcellular location">
    <subcellularLocation>
        <location evidence="4">Nucleus</location>
    </subcellularLocation>
    <subcellularLocation>
        <location evidence="4">Cytoplasm</location>
    </subcellularLocation>
    <subcellularLocation>
        <location evidence="1">Nucleus</location>
        <location evidence="1">Nucleoplasm</location>
    </subcellularLocation>
    <subcellularLocation>
        <location evidence="1">Cytoplasm</location>
        <location evidence="1">Perinuclear region</location>
    </subcellularLocation>
    <subcellularLocation>
        <location evidence="1">Cytoplasm</location>
        <location evidence="1">Cytoskeleton</location>
        <location evidence="1">Spindle pole</location>
    </subcellularLocation>
    <subcellularLocation>
        <location evidence="1">Cytoplasm</location>
        <location evidence="1">Cytoskeleton</location>
        <location evidence="1">Microtubule organizing center</location>
        <location evidence="1">Centrosome</location>
    </subcellularLocation>
    <subcellularLocation>
        <location evidence="1">Chromosome</location>
        <location evidence="1">Centromere</location>
        <location evidence="1">Kinetochore</location>
    </subcellularLocation>
    <text evidence="1 4">The monomeric form is cytoplasmic in unstressed cells (PubMed:26159920). Predominantly nuclear protein in both unstressed and heat shocked cells. Translocates in the nucleus upon heat shock. Nucleocytoplasmic shuttling protein. Colocalizes with IER5 in the nucleus. Colocalizes with BAG3 to the nucleus upon heat stress. Localizes in subnuclear granules called nuclear stress bodies (nSBs) upon heat shock. Colocalizes with SYMPK and SUMO1 in nSBs upon heat shock. Colocalizes with PRKACA/PKA in the nucleus and nSBs upon heat shock. Relocalizes from the nucleus to the cytoplasm during the attenuation and recovery phase period of the heat shock response. Translocates in the cytoplasm in a YWHAE- and XPO1/CRM1-dependent manner. Together with histone H2AX, redistributed in discrete nuclear DNA damage-induced foci after ionizing radiation (IR). Colocalizes with calcium-responsive transactivator SS18L1 at kinetochore region on the mitotic chromosomes. Colocalizes with gamma tubulin at centrosome. Localizes at spindle pole in metaphase. Colocalizes with PLK1 at spindle poles during prometaphase.</text>
</comment>
<comment type="alternative products">
    <event type="alternative splicing"/>
    <isoform>
        <id>P38532-1</id>
        <name>2</name>
        <sequence type="displayed"/>
    </isoform>
    <isoform>
        <id>P38532-2</id>
        <name>1</name>
        <sequence type="described" ref="VSP_002416"/>
    </isoform>
</comment>
<comment type="domain">
    <text evidence="1">In unstressed cells, spontaneous homotrimerization is inhibited. Intramolecular interactions between the hydrophobic repeat HR-A/B and HR-C regions are necessary to maintain HSF1 in the inactive, monomeric conformation. Furthermore, intramolecular interactions between the regulatory domain and the nonadjacent transactivation domain prevents transcriptional activation, a process that is relieved upon heat shock. The regulatory domain is necessary for full repression of the transcriptional activation domain in unstressed cells through its phosphorylation on Ser-303 and Ser-307. In heat stressed cells, HSF1 homotrimerization occurs through formation of a three-stranded coiled-coil structure generated by intermolecular interactions between HR-A/B regions allowing DNA-binding activity. The D domain is necessary for translocation to the nucleus, interaction with JNK1 and MAPK3 and efficient JNK1- and MAPK3-dependent phosphorylation. The regulatory domain confers heat shock inducibility on the transcriptional transactivation domain. The regulatory domain is necessary for transcriptional activation through its phosphorylation on Ser-230 upon heat shock. 9aaTAD is a transactivation motif present in a large number of yeast and animal transcription factors.</text>
</comment>
<comment type="PTM">
    <text evidence="1">Phosphorylated. Phosphorylated in unstressed cells; this phosphorylation is constitutive and implicated in the repression of HSF1 transcriptional activity. Phosphorylated on Ser-121 by MAPKAPK2; this phosphorylation promotes interaction with HSP90 proteins and inhibits HSF1 homotrimerization, DNA-binding and transactivation activities. Phosphorylation on Ser-303 by GSK3B/GSK3-beat and on Ser-307 by MAPK3 within the regulatory domain is involved in the repression of HSF1 transcriptional activity and occurs in a RAF1-dependent manner. Phosphorylation on Ser-303 and Ser-307 increases HSF1 nuclear export in a YWHAE- and XPO1/CRM1-dependent manner. Phosphorylation on Ser-307 is a prerequisite for phosphorylation on Ser-303. According to, Ser-303 is not phosphorylated in unstressed cells. Phosphorylated on Ser-415 by PLK1; phosphorylation promotes nuclear translocation upon heat shock. Hyperphosphorylated upon heat shock and during the attenuation and recovery phase period of the heat shock response. Phosphorylated on Thr-142; this phosphorylation increases HSF1 transactivation activity upon heat shock. Phosphorylation on Ser-230 by CAMK2A; this phosphorylation enhances HSF1 transactivation activity upon heat shock. Phosphorylation on Ser-326 by MAPK12; this phosphorylation enhances HSF1 nuclear translocation, homotrimerization and transactivation activities upon heat shock. Phosphorylated on Ser-320 by PRKACA/PKA; this phosphorylation promotes nuclear localization and transcriptional activity upon heat shock. Phosphorylated by MAPK8; this phosphorylation occurs upon heat shock, induces HSF1 translocation into nuclear stress bodies and negatively regulates transactivation activity. Neither basal nor stress-inducible phosphorylation on Ser-230, Ser-292, Ser-303, Ser-307, Ser-314, Ser-319, Ser-320, Thr-323, Ser-326, Ser-338, Ser-345, Ser-364 and Thr-365 within the regulatory domain is involved in the regulation of HSF1 subcellular localization or DNA-binding activity; however, it negatively regulates HSF1 transactivation activity. Phosphorylated on Ser-216 by PLK1 in the early mitotic period; this phosphorylation regulates HSF1 localization to the spindle pole, the recruitment of the SCF(BTRC) ubiquitin ligase complex inducing HSF1 degradation, and hence mitotic progression. Dephosphorylated on Ser-121, Ser-307, Ser-314 and Thr-323 by phosphatase PPP2CA in an IER5-dependent manner, leading to HSF1-mediated transactivation activity.</text>
</comment>
<comment type="PTM">
    <text evidence="1">Sumoylated with SUMO1 and SUMO2 upon heat shock in a ERK2-dependent manner. Sumoylated by SUMO1 on Lys-298; sumoylation occurs upon heat shock and promotes its localization to nuclear stress bodies and DNA-binding activity. Phosphorylation on Ser-303 and Ser-307 is probably a prerequisite for sumoylation.</text>
</comment>
<comment type="PTM">
    <text evidence="1">Acetylated on Lys-118; this acetylation is decreased in a IER5-dependent manner. Acetylated on Lys-118, Lys-208 and Lys-298; these acetylations occur in a EP300-dependent manner. Acetylated on Lys-80; this acetylation inhibits DNA-binding activity upon heat shock. Deacetylated on Lys-80 by SIRT1; this deacetylation increases DNA-binding activity.</text>
</comment>
<comment type="PTM">
    <text evidence="1">Ubiquitinated by SCF(BTRC) and degraded following stimulus-dependent phosphorylation at Ser-216 by PLK1 in mitosis. Polyubiquitinated. Undergoes proteasomal degradation upon heat shock and during the attenuation and recovery phase period of the heat shock response.</text>
</comment>
<comment type="similarity">
    <text evidence="7">Belongs to the HSF family.</text>
</comment>
<organism>
    <name type="scientific">Mus musculus</name>
    <name type="common">Mouse</name>
    <dbReference type="NCBI Taxonomy" id="10090"/>
    <lineage>
        <taxon>Eukaryota</taxon>
        <taxon>Metazoa</taxon>
        <taxon>Chordata</taxon>
        <taxon>Craniata</taxon>
        <taxon>Vertebrata</taxon>
        <taxon>Euteleostomi</taxon>
        <taxon>Mammalia</taxon>
        <taxon>Eutheria</taxon>
        <taxon>Euarchontoglires</taxon>
        <taxon>Glires</taxon>
        <taxon>Rodentia</taxon>
        <taxon>Myomorpha</taxon>
        <taxon>Muroidea</taxon>
        <taxon>Muridae</taxon>
        <taxon>Murinae</taxon>
        <taxon>Mus</taxon>
        <taxon>Mus</taxon>
    </lineage>
</organism>
<evidence type="ECO:0000250" key="1">
    <source>
        <dbReference type="UniProtKB" id="Q00613"/>
    </source>
</evidence>
<evidence type="ECO:0000256" key="2">
    <source>
        <dbReference type="SAM" id="MobiDB-lite"/>
    </source>
</evidence>
<evidence type="ECO:0000269" key="3">
    <source>
    </source>
</evidence>
<evidence type="ECO:0000269" key="4">
    <source>
    </source>
</evidence>
<evidence type="ECO:0000303" key="5">
    <source>
    </source>
</evidence>
<evidence type="ECO:0000303" key="6">
    <source>
    </source>
</evidence>
<evidence type="ECO:0000305" key="7"/>
<evidence type="ECO:0000312" key="8">
    <source>
        <dbReference type="MGI" id="MGI:96238"/>
    </source>
</evidence>
<evidence type="ECO:0007744" key="9">
    <source>
    </source>
</evidence>
<name>HSF1_MOUSE</name>
<dbReference type="EMBL" id="X61753">
    <property type="protein sequence ID" value="CAA43892.1"/>
    <property type="molecule type" value="mRNA"/>
</dbReference>
<dbReference type="EMBL" id="BC013716">
    <property type="protein sequence ID" value="AAH13716.1"/>
    <property type="molecule type" value="mRNA"/>
</dbReference>
<dbReference type="EMBL" id="AF059275">
    <property type="protein sequence ID" value="AAC80425.1"/>
    <property type="molecule type" value="Genomic_DNA"/>
</dbReference>
<dbReference type="CCDS" id="CCDS27572.1">
    <molecule id="P38532-2"/>
</dbReference>
<dbReference type="CCDS" id="CCDS88787.1">
    <molecule id="P38532-1"/>
</dbReference>
<dbReference type="PIR" id="A40583">
    <property type="entry name" value="A40583"/>
</dbReference>
<dbReference type="RefSeq" id="NP_001318083.1">
    <molecule id="P38532-1"/>
    <property type="nucleotide sequence ID" value="NM_001331154.1"/>
</dbReference>
<dbReference type="RefSeq" id="NP_032322.1">
    <molecule id="P38532-2"/>
    <property type="nucleotide sequence ID" value="NM_008296.3"/>
</dbReference>
<dbReference type="BMRB" id="P38532"/>
<dbReference type="SMR" id="P38532"/>
<dbReference type="BioGRID" id="200443">
    <property type="interactions" value="14"/>
</dbReference>
<dbReference type="FunCoup" id="P38532">
    <property type="interactions" value="1621"/>
</dbReference>
<dbReference type="IntAct" id="P38532">
    <property type="interactions" value="13"/>
</dbReference>
<dbReference type="MINT" id="P38532"/>
<dbReference type="STRING" id="10090.ENSMUSP00000072617"/>
<dbReference type="BindingDB" id="P38532"/>
<dbReference type="ChEMBL" id="CHEMBL5313"/>
<dbReference type="GlyGen" id="P38532">
    <property type="glycosylation" value="5 sites, 1 O-linked glycan (3 sites)"/>
</dbReference>
<dbReference type="iPTMnet" id="P38532"/>
<dbReference type="PhosphoSitePlus" id="P38532"/>
<dbReference type="jPOST" id="P38532"/>
<dbReference type="PaxDb" id="10090-ENSMUSP00000072617"/>
<dbReference type="PeptideAtlas" id="P38532"/>
<dbReference type="ProteomicsDB" id="273389">
    <molecule id="P38532-1"/>
</dbReference>
<dbReference type="ProteomicsDB" id="273390">
    <molecule id="P38532-2"/>
</dbReference>
<dbReference type="Pumba" id="P38532"/>
<dbReference type="Antibodypedia" id="1848">
    <property type="antibodies" value="1701 antibodies from 51 providers"/>
</dbReference>
<dbReference type="DNASU" id="15499"/>
<dbReference type="Ensembl" id="ENSMUST00000072838.6">
    <molecule id="P38532-2"/>
    <property type="protein sequence ID" value="ENSMUSP00000072617.6"/>
    <property type="gene ID" value="ENSMUSG00000022556.12"/>
</dbReference>
<dbReference type="Ensembl" id="ENSMUST00000227478.2">
    <molecule id="P38532-1"/>
    <property type="protein sequence ID" value="ENSMUSP00000154602.2"/>
    <property type="gene ID" value="ENSMUSG00000022556.12"/>
</dbReference>
<dbReference type="GeneID" id="15499"/>
<dbReference type="KEGG" id="mmu:15499"/>
<dbReference type="UCSC" id="uc056yzg.1">
    <molecule id="P38532-1"/>
    <property type="organism name" value="mouse"/>
</dbReference>
<dbReference type="AGR" id="MGI:96238"/>
<dbReference type="CTD" id="3297"/>
<dbReference type="MGI" id="MGI:96238">
    <property type="gene designation" value="Hsf1"/>
</dbReference>
<dbReference type="VEuPathDB" id="HostDB:ENSMUSG00000022556"/>
<dbReference type="eggNOG" id="KOG0627">
    <property type="taxonomic scope" value="Eukaryota"/>
</dbReference>
<dbReference type="GeneTree" id="ENSGT00940000158421"/>
<dbReference type="HOGENOM" id="CLU_038829_2_0_1"/>
<dbReference type="InParanoid" id="P38532"/>
<dbReference type="OMA" id="LICWSPQ"/>
<dbReference type="OrthoDB" id="60033at2759"/>
<dbReference type="PhylomeDB" id="P38532"/>
<dbReference type="TreeFam" id="TF330401"/>
<dbReference type="Reactome" id="R-MMU-3371453">
    <property type="pathway name" value="Regulation of HSF1-mediated heat shock response"/>
</dbReference>
<dbReference type="Reactome" id="R-MMU-3371511">
    <property type="pathway name" value="HSF1 activation"/>
</dbReference>
<dbReference type="Reactome" id="R-MMU-3371568">
    <property type="pathway name" value="Attenuation phase"/>
</dbReference>
<dbReference type="Reactome" id="R-MMU-3371571">
    <property type="pathway name" value="HSF1-dependent transactivation"/>
</dbReference>
<dbReference type="Reactome" id="R-MMU-9841251">
    <property type="pathway name" value="Mitochondrial unfolded protein response (UPRmt)"/>
</dbReference>
<dbReference type="BioGRID-ORCS" id="15499">
    <property type="hits" value="5 hits in 81 CRISPR screens"/>
</dbReference>
<dbReference type="ChiTaRS" id="Hsf1">
    <property type="organism name" value="mouse"/>
</dbReference>
<dbReference type="PRO" id="PR:P38532"/>
<dbReference type="Proteomes" id="UP000000589">
    <property type="component" value="Chromosome 15"/>
</dbReference>
<dbReference type="RNAct" id="P38532">
    <property type="molecule type" value="protein"/>
</dbReference>
<dbReference type="Bgee" id="ENSMUSG00000022556">
    <property type="expression patterns" value="Expressed in animal zygote and 258 other cell types or tissues"/>
</dbReference>
<dbReference type="ExpressionAtlas" id="P38532">
    <property type="expression patterns" value="baseline and differential"/>
</dbReference>
<dbReference type="GO" id="GO:0005813">
    <property type="term" value="C:centrosome"/>
    <property type="evidence" value="ECO:0000250"/>
    <property type="project" value="UniProtKB"/>
</dbReference>
<dbReference type="GO" id="GO:0005737">
    <property type="term" value="C:cytoplasm"/>
    <property type="evidence" value="ECO:0000314"/>
    <property type="project" value="MGI"/>
</dbReference>
<dbReference type="GO" id="GO:0005829">
    <property type="term" value="C:cytosol"/>
    <property type="evidence" value="ECO:0000304"/>
    <property type="project" value="Reactome"/>
</dbReference>
<dbReference type="GO" id="GO:0000791">
    <property type="term" value="C:euchromatin"/>
    <property type="evidence" value="ECO:0007669"/>
    <property type="project" value="Ensembl"/>
</dbReference>
<dbReference type="GO" id="GO:0000792">
    <property type="term" value="C:heterochromatin"/>
    <property type="evidence" value="ECO:0007669"/>
    <property type="project" value="Ensembl"/>
</dbReference>
<dbReference type="GO" id="GO:0000776">
    <property type="term" value="C:kinetochore"/>
    <property type="evidence" value="ECO:0000250"/>
    <property type="project" value="UniProtKB"/>
</dbReference>
<dbReference type="GO" id="GO:0097431">
    <property type="term" value="C:mitotic spindle pole"/>
    <property type="evidence" value="ECO:0000250"/>
    <property type="project" value="UniProtKB"/>
</dbReference>
<dbReference type="GO" id="GO:0097165">
    <property type="term" value="C:nuclear stress granule"/>
    <property type="evidence" value="ECO:0000250"/>
    <property type="project" value="UniProtKB"/>
</dbReference>
<dbReference type="GO" id="GO:0005654">
    <property type="term" value="C:nucleoplasm"/>
    <property type="evidence" value="ECO:0000250"/>
    <property type="project" value="UniProtKB"/>
</dbReference>
<dbReference type="GO" id="GO:0005634">
    <property type="term" value="C:nucleus"/>
    <property type="evidence" value="ECO:0000314"/>
    <property type="project" value="MGI"/>
</dbReference>
<dbReference type="GO" id="GO:0048471">
    <property type="term" value="C:perinuclear region of cytoplasm"/>
    <property type="evidence" value="ECO:0000250"/>
    <property type="project" value="UniProtKB"/>
</dbReference>
<dbReference type="GO" id="GO:0016605">
    <property type="term" value="C:PML body"/>
    <property type="evidence" value="ECO:0000250"/>
    <property type="project" value="UniProtKB"/>
</dbReference>
<dbReference type="GO" id="GO:0045120">
    <property type="term" value="C:pronucleus"/>
    <property type="evidence" value="ECO:0000314"/>
    <property type="project" value="MGI"/>
</dbReference>
<dbReference type="GO" id="GO:0101031">
    <property type="term" value="C:protein folding chaperone complex"/>
    <property type="evidence" value="ECO:0000250"/>
    <property type="project" value="UniProtKB"/>
</dbReference>
<dbReference type="GO" id="GO:0032991">
    <property type="term" value="C:protein-containing complex"/>
    <property type="evidence" value="ECO:0000353"/>
    <property type="project" value="MGI"/>
</dbReference>
<dbReference type="GO" id="GO:1990904">
    <property type="term" value="C:ribonucleoprotein complex"/>
    <property type="evidence" value="ECO:0000250"/>
    <property type="project" value="UniProtKB"/>
</dbReference>
<dbReference type="GO" id="GO:0003682">
    <property type="term" value="F:chromatin binding"/>
    <property type="evidence" value="ECO:0000314"/>
    <property type="project" value="MGI"/>
</dbReference>
<dbReference type="GO" id="GO:0031490">
    <property type="term" value="F:chromatin DNA binding"/>
    <property type="evidence" value="ECO:0000250"/>
    <property type="project" value="UniProtKB"/>
</dbReference>
<dbReference type="GO" id="GO:0003677">
    <property type="term" value="F:DNA binding"/>
    <property type="evidence" value="ECO:0000314"/>
    <property type="project" value="MGI"/>
</dbReference>
<dbReference type="GO" id="GO:0001228">
    <property type="term" value="F:DNA-binding transcription activator activity, RNA polymerase II-specific"/>
    <property type="evidence" value="ECO:0000250"/>
    <property type="project" value="UniProtKB"/>
</dbReference>
<dbReference type="GO" id="GO:0001227">
    <property type="term" value="F:DNA-binding transcription repressor activity, RNA polymerase II-specific"/>
    <property type="evidence" value="ECO:0007669"/>
    <property type="project" value="Ensembl"/>
</dbReference>
<dbReference type="GO" id="GO:0140296">
    <property type="term" value="F:general transcription initiation factor binding"/>
    <property type="evidence" value="ECO:0007669"/>
    <property type="project" value="Ensembl"/>
</dbReference>
<dbReference type="GO" id="GO:0031072">
    <property type="term" value="F:heat shock protein binding"/>
    <property type="evidence" value="ECO:0000250"/>
    <property type="project" value="UniProtKB"/>
</dbReference>
<dbReference type="GO" id="GO:0051879">
    <property type="term" value="F:Hsp90 protein binding"/>
    <property type="evidence" value="ECO:0000250"/>
    <property type="project" value="UniProtKB"/>
</dbReference>
<dbReference type="GO" id="GO:0042802">
    <property type="term" value="F:identical protein binding"/>
    <property type="evidence" value="ECO:0000250"/>
    <property type="project" value="UniProtKB"/>
</dbReference>
<dbReference type="GO" id="GO:1990841">
    <property type="term" value="F:promoter-specific chromatin binding"/>
    <property type="evidence" value="ECO:0007669"/>
    <property type="project" value="Ensembl"/>
</dbReference>
<dbReference type="GO" id="GO:0046982">
    <property type="term" value="F:protein heterodimerization activity"/>
    <property type="evidence" value="ECO:0000250"/>
    <property type="project" value="UniProtKB"/>
</dbReference>
<dbReference type="GO" id="GO:0019901">
    <property type="term" value="F:protein kinase binding"/>
    <property type="evidence" value="ECO:0007669"/>
    <property type="project" value="Ensembl"/>
</dbReference>
<dbReference type="GO" id="GO:0000978">
    <property type="term" value="F:RNA polymerase II cis-regulatory region sequence-specific DNA binding"/>
    <property type="evidence" value="ECO:0000314"/>
    <property type="project" value="MGI"/>
</dbReference>
<dbReference type="GO" id="GO:0001162">
    <property type="term" value="F:RNA polymerase II intronic transcription regulatory region sequence-specific DNA binding"/>
    <property type="evidence" value="ECO:0000266"/>
    <property type="project" value="MGI"/>
</dbReference>
<dbReference type="GO" id="GO:0043565">
    <property type="term" value="F:sequence-specific DNA binding"/>
    <property type="evidence" value="ECO:0000314"/>
    <property type="project" value="MGI"/>
</dbReference>
<dbReference type="GO" id="GO:0098847">
    <property type="term" value="F:sequence-specific single stranded DNA binding"/>
    <property type="evidence" value="ECO:0007669"/>
    <property type="project" value="Ensembl"/>
</dbReference>
<dbReference type="GO" id="GO:0097677">
    <property type="term" value="F:STAT family protein binding"/>
    <property type="evidence" value="ECO:0007669"/>
    <property type="project" value="Ensembl"/>
</dbReference>
<dbReference type="GO" id="GO:0061770">
    <property type="term" value="F:translation elongation factor binding"/>
    <property type="evidence" value="ECO:0000250"/>
    <property type="project" value="UniProtKB"/>
</dbReference>
<dbReference type="GO" id="GO:0008283">
    <property type="term" value="P:cell population proliferation"/>
    <property type="evidence" value="ECO:0000316"/>
    <property type="project" value="MGI"/>
</dbReference>
<dbReference type="GO" id="GO:1904385">
    <property type="term" value="P:cellular response to angiotensin"/>
    <property type="evidence" value="ECO:0007669"/>
    <property type="project" value="Ensembl"/>
</dbReference>
<dbReference type="GO" id="GO:0071276">
    <property type="term" value="P:cellular response to cadmium ion"/>
    <property type="evidence" value="ECO:0000250"/>
    <property type="project" value="UniProtKB"/>
</dbReference>
<dbReference type="GO" id="GO:0071280">
    <property type="term" value="P:cellular response to copper ion"/>
    <property type="evidence" value="ECO:0000250"/>
    <property type="project" value="UniProtKB"/>
</dbReference>
<dbReference type="GO" id="GO:0072738">
    <property type="term" value="P:cellular response to diamide"/>
    <property type="evidence" value="ECO:0000250"/>
    <property type="project" value="UniProtKB"/>
</dbReference>
<dbReference type="GO" id="GO:0071392">
    <property type="term" value="P:cellular response to estradiol stimulus"/>
    <property type="evidence" value="ECO:0007669"/>
    <property type="project" value="Ensembl"/>
</dbReference>
<dbReference type="GO" id="GO:0071480">
    <property type="term" value="P:cellular response to gamma radiation"/>
    <property type="evidence" value="ECO:0000250"/>
    <property type="project" value="UniProtKB"/>
</dbReference>
<dbReference type="GO" id="GO:0034605">
    <property type="term" value="P:cellular response to heat"/>
    <property type="evidence" value="ECO:0000250"/>
    <property type="project" value="UniProtKB"/>
</dbReference>
<dbReference type="GO" id="GO:0070301">
    <property type="term" value="P:cellular response to hydrogen peroxide"/>
    <property type="evidence" value="ECO:0007669"/>
    <property type="project" value="Ensembl"/>
</dbReference>
<dbReference type="GO" id="GO:1904845">
    <property type="term" value="P:cellular response to L-glutamine"/>
    <property type="evidence" value="ECO:0007669"/>
    <property type="project" value="Ensembl"/>
</dbReference>
<dbReference type="GO" id="GO:0071222">
    <property type="term" value="P:cellular response to lipopolysaccharide"/>
    <property type="evidence" value="ECO:0007669"/>
    <property type="project" value="Ensembl"/>
</dbReference>
<dbReference type="GO" id="GO:1904843">
    <property type="term" value="P:cellular response to nitroglycerin"/>
    <property type="evidence" value="ECO:0007669"/>
    <property type="project" value="Ensembl"/>
</dbReference>
<dbReference type="GO" id="GO:0035865">
    <property type="term" value="P:cellular response to potassium ion"/>
    <property type="evidence" value="ECO:0007669"/>
    <property type="project" value="Ensembl"/>
</dbReference>
<dbReference type="GO" id="GO:1903936">
    <property type="term" value="P:cellular response to sodium arsenite"/>
    <property type="evidence" value="ECO:0000250"/>
    <property type="project" value="UniProtKB"/>
</dbReference>
<dbReference type="GO" id="GO:0034620">
    <property type="term" value="P:cellular response to unfolded protein"/>
    <property type="evidence" value="ECO:0000250"/>
    <property type="project" value="UniProtKB"/>
</dbReference>
<dbReference type="GO" id="GO:0071466">
    <property type="term" value="P:cellular response to xenobiotic stimulus"/>
    <property type="evidence" value="ECO:0007669"/>
    <property type="project" value="Ensembl"/>
</dbReference>
<dbReference type="GO" id="GO:0006952">
    <property type="term" value="P:defense response"/>
    <property type="evidence" value="ECO:0007669"/>
    <property type="project" value="Ensembl"/>
</dbReference>
<dbReference type="GO" id="GO:0006281">
    <property type="term" value="P:DNA repair"/>
    <property type="evidence" value="ECO:0007669"/>
    <property type="project" value="UniProtKB-KW"/>
</dbReference>
<dbReference type="GO" id="GO:0001892">
    <property type="term" value="P:embryonic placenta development"/>
    <property type="evidence" value="ECO:0000315"/>
    <property type="project" value="MGI"/>
</dbReference>
<dbReference type="GO" id="GO:0060136">
    <property type="term" value="P:embryonic process involved in female pregnancy"/>
    <property type="evidence" value="ECO:0000315"/>
    <property type="project" value="MGI"/>
</dbReference>
<dbReference type="GO" id="GO:0050673">
    <property type="term" value="P:epithelial cell proliferation"/>
    <property type="evidence" value="ECO:0000316"/>
    <property type="project" value="MGI"/>
</dbReference>
<dbReference type="GO" id="GO:0007143">
    <property type="term" value="P:female meiotic nuclear division"/>
    <property type="evidence" value="ECO:0000315"/>
    <property type="project" value="MGI"/>
</dbReference>
<dbReference type="GO" id="GO:0001701">
    <property type="term" value="P:in utero embryonic development"/>
    <property type="evidence" value="ECO:0000315"/>
    <property type="project" value="MGI"/>
</dbReference>
<dbReference type="GO" id="GO:0000165">
    <property type="term" value="P:MAPK cascade"/>
    <property type="evidence" value="ECO:0000250"/>
    <property type="project" value="UniProtKB"/>
</dbReference>
<dbReference type="GO" id="GO:0006397">
    <property type="term" value="P:mRNA processing"/>
    <property type="evidence" value="ECO:0007669"/>
    <property type="project" value="UniProtKB-KW"/>
</dbReference>
<dbReference type="GO" id="GO:0051028">
    <property type="term" value="P:mRNA transport"/>
    <property type="evidence" value="ECO:0007669"/>
    <property type="project" value="UniProtKB-KW"/>
</dbReference>
<dbReference type="GO" id="GO:0010667">
    <property type="term" value="P:negative regulation of cardiac muscle cell apoptotic process"/>
    <property type="evidence" value="ECO:0007669"/>
    <property type="project" value="Ensembl"/>
</dbReference>
<dbReference type="GO" id="GO:2001033">
    <property type="term" value="P:negative regulation of double-strand break repair via nonhomologous end joining"/>
    <property type="evidence" value="ECO:0000250"/>
    <property type="project" value="UniProtKB"/>
</dbReference>
<dbReference type="GO" id="GO:0050680">
    <property type="term" value="P:negative regulation of epithelial cell proliferation"/>
    <property type="evidence" value="ECO:0000316"/>
    <property type="project" value="MGI"/>
</dbReference>
<dbReference type="GO" id="GO:0090084">
    <property type="term" value="P:negative regulation of inclusion body assembly"/>
    <property type="evidence" value="ECO:0007669"/>
    <property type="project" value="Ensembl"/>
</dbReference>
<dbReference type="GO" id="GO:0031333">
    <property type="term" value="P:negative regulation of protein-containing complex assembly"/>
    <property type="evidence" value="ECO:0000250"/>
    <property type="project" value="UniProtKB"/>
</dbReference>
<dbReference type="GO" id="GO:0000122">
    <property type="term" value="P:negative regulation of transcription by RNA polymerase II"/>
    <property type="evidence" value="ECO:0000250"/>
    <property type="project" value="UniProtKB"/>
</dbReference>
<dbReference type="GO" id="GO:0032720">
    <property type="term" value="P:negative regulation of tumor necrosis factor production"/>
    <property type="evidence" value="ECO:0000315"/>
    <property type="project" value="MGI"/>
</dbReference>
<dbReference type="GO" id="GO:1902512">
    <property type="term" value="P:positive regulation of apoptotic DNA fragmentation"/>
    <property type="evidence" value="ECO:0007669"/>
    <property type="project" value="Ensembl"/>
</dbReference>
<dbReference type="GO" id="GO:2001235">
    <property type="term" value="P:positive regulation of apoptotic signaling pathway"/>
    <property type="evidence" value="ECO:0007669"/>
    <property type="project" value="Ensembl"/>
</dbReference>
<dbReference type="GO" id="GO:0120162">
    <property type="term" value="P:positive regulation of cold-induced thermogenesis"/>
    <property type="evidence" value="ECO:0000315"/>
    <property type="project" value="YuBioLab"/>
</dbReference>
<dbReference type="GO" id="GO:0010628">
    <property type="term" value="P:positive regulation of gene expression"/>
    <property type="evidence" value="ECO:0000315"/>
    <property type="project" value="CACAO"/>
</dbReference>
<dbReference type="GO" id="GO:0090261">
    <property type="term" value="P:positive regulation of inclusion body assembly"/>
    <property type="evidence" value="ECO:0007669"/>
    <property type="project" value="Ensembl"/>
</dbReference>
<dbReference type="GO" id="GO:0045651">
    <property type="term" value="P:positive regulation of macrophage differentiation"/>
    <property type="evidence" value="ECO:0007669"/>
    <property type="project" value="Ensembl"/>
</dbReference>
<dbReference type="GO" id="GO:0045931">
    <property type="term" value="P:positive regulation of mitotic cell cycle"/>
    <property type="evidence" value="ECO:0000250"/>
    <property type="project" value="UniProtKB"/>
</dbReference>
<dbReference type="GO" id="GO:0040018">
    <property type="term" value="P:positive regulation of multicellular organism growth"/>
    <property type="evidence" value="ECO:0000315"/>
    <property type="project" value="MGI"/>
</dbReference>
<dbReference type="GO" id="GO:0062029">
    <property type="term" value="P:positive regulation of stress granule assembly"/>
    <property type="evidence" value="ECO:0007669"/>
    <property type="project" value="Ensembl"/>
</dbReference>
<dbReference type="GO" id="GO:0045944">
    <property type="term" value="P:positive regulation of transcription by RNA polymerase II"/>
    <property type="evidence" value="ECO:0000250"/>
    <property type="project" value="UniProtKB"/>
</dbReference>
<dbReference type="GO" id="GO:0065003">
    <property type="term" value="P:protein-containing complex assembly"/>
    <property type="evidence" value="ECO:0000250"/>
    <property type="project" value="UniProtKB"/>
</dbReference>
<dbReference type="GO" id="GO:1900034">
    <property type="term" value="P:regulation of cellular response to heat"/>
    <property type="evidence" value="ECO:0000250"/>
    <property type="project" value="UniProtKB"/>
</dbReference>
<dbReference type="GO" id="GO:0014823">
    <property type="term" value="P:response to activity"/>
    <property type="evidence" value="ECO:0007669"/>
    <property type="project" value="Ensembl"/>
</dbReference>
<dbReference type="GO" id="GO:0009408">
    <property type="term" value="P:response to heat"/>
    <property type="evidence" value="ECO:0000315"/>
    <property type="project" value="MGI"/>
</dbReference>
<dbReference type="GO" id="GO:1990910">
    <property type="term" value="P:response to hypobaric hypoxia"/>
    <property type="evidence" value="ECO:0007669"/>
    <property type="project" value="Ensembl"/>
</dbReference>
<dbReference type="GO" id="GO:0032496">
    <property type="term" value="P:response to lipopolysaccharide"/>
    <property type="evidence" value="ECO:0000315"/>
    <property type="project" value="MGI"/>
</dbReference>
<dbReference type="GO" id="GO:0007584">
    <property type="term" value="P:response to nutrient"/>
    <property type="evidence" value="ECO:0007669"/>
    <property type="project" value="Ensembl"/>
</dbReference>
<dbReference type="GO" id="GO:1901652">
    <property type="term" value="P:response to peptide"/>
    <property type="evidence" value="ECO:0007669"/>
    <property type="project" value="Ensembl"/>
</dbReference>
<dbReference type="GO" id="GO:1990911">
    <property type="term" value="P:response to psychosocial stress"/>
    <property type="evidence" value="ECO:0007669"/>
    <property type="project" value="Ensembl"/>
</dbReference>
<dbReference type="GO" id="GO:0033574">
    <property type="term" value="P:response to testosterone"/>
    <property type="evidence" value="ECO:0007669"/>
    <property type="project" value="Ensembl"/>
</dbReference>
<dbReference type="GO" id="GO:0007283">
    <property type="term" value="P:spermatogenesis"/>
    <property type="evidence" value="ECO:0000316"/>
    <property type="project" value="MGI"/>
</dbReference>
<dbReference type="FunFam" id="1.10.10.10:FF:000027">
    <property type="entry name" value="Heat shock transcription factor 1"/>
    <property type="match status" value="1"/>
</dbReference>
<dbReference type="Gene3D" id="1.10.10.10">
    <property type="entry name" value="Winged helix-like DNA-binding domain superfamily/Winged helix DNA-binding domain"/>
    <property type="match status" value="1"/>
</dbReference>
<dbReference type="InterPro" id="IPR000232">
    <property type="entry name" value="HSF_DNA-bd"/>
</dbReference>
<dbReference type="InterPro" id="IPR010542">
    <property type="entry name" value="Vert_HSTF_C"/>
</dbReference>
<dbReference type="InterPro" id="IPR036388">
    <property type="entry name" value="WH-like_DNA-bd_sf"/>
</dbReference>
<dbReference type="InterPro" id="IPR036390">
    <property type="entry name" value="WH_DNA-bd_sf"/>
</dbReference>
<dbReference type="PANTHER" id="PTHR10015:SF274">
    <property type="entry name" value="HEAT SHOCK FACTOR PROTEIN 1"/>
    <property type="match status" value="1"/>
</dbReference>
<dbReference type="PANTHER" id="PTHR10015">
    <property type="entry name" value="HEAT SHOCK TRANSCRIPTION FACTOR"/>
    <property type="match status" value="1"/>
</dbReference>
<dbReference type="Pfam" id="PF00447">
    <property type="entry name" value="HSF_DNA-bind"/>
    <property type="match status" value="1"/>
</dbReference>
<dbReference type="Pfam" id="PF06546">
    <property type="entry name" value="Vert_HS_TF"/>
    <property type="match status" value="1"/>
</dbReference>
<dbReference type="PRINTS" id="PR00056">
    <property type="entry name" value="HSFDOMAIN"/>
</dbReference>
<dbReference type="SMART" id="SM00415">
    <property type="entry name" value="HSF"/>
    <property type="match status" value="1"/>
</dbReference>
<dbReference type="SUPFAM" id="SSF46785">
    <property type="entry name" value="Winged helix' DNA-binding domain"/>
    <property type="match status" value="1"/>
</dbReference>
<dbReference type="PROSITE" id="PS00434">
    <property type="entry name" value="HSF_DOMAIN"/>
    <property type="match status" value="1"/>
</dbReference>
<sequence length="525" mass="57223">MDLAVGPGAAGPSNVPAFLTKLWTLVSDPDTDALICWSPSGNSFHVFDQGQFAKEVLPKYFKHNNMASFVRQLNMYGFRKVVHIEQGGLVKPERDDTEFQHPCFLRGQEQLLENIKRKVTSVSTLKSEDIKIRQDSVTRLLTDVQLMKGKQECMDSKLLAMKHENEALWREVASLRQKHAQQQKVVNKLIQFLISLVQSNRILGVKRKIPLMLSDSNSAHSVPKYGRQYSLEHVHGPGPYSAPSPAYSSSSLYSSDAVTSSGPIISDITELAPTSPLASPGRSIDERPLSSSTLVRVKQEPPSPPHSPRVLEASPGRPSSMDTPLSPTAFIDSILRESEPTPAASNTAPMDTTGAQAPALPTPSTPEKCLSVACLDKNELSDHLDAMDSNLDNLQTMLTSHGFSVDTSALLDLFSPSVTMPDMSLPDLDSSLASIQELLSPQEPPRPIEAENSNPDSGKQLVHYTAQPLFLLDPDAVDTGSSELPVLFELGESSYFSEGDDYTDDPTISLLTGTEPHKAKDPTVS</sequence>
<protein>
    <recommendedName>
        <fullName evidence="1">Heat shock factor protein 1</fullName>
        <shortName>HSF 1</shortName>
    </recommendedName>
    <alternativeName>
        <fullName evidence="1">Heat shock transcription factor 1</fullName>
        <shortName>HSTF 1</shortName>
    </alternativeName>
</protein>
<gene>
    <name evidence="8" type="primary">Hsf1</name>
</gene>